<sequence length="334" mass="37307">MKTQIQELRTQALADIESAGDAKAIDELNIRYLGRKGLVNDLMKGMAKVPADEKPLIGRLANELKNDLQDAFAKAVEKFGSGKEAGDVVDVTLPGRPRKVGGLHPLTTINLEICDIFTRLGFDIAQGPEVELDYYNFEALNFPKDHPARDMQDTFFVSDNVVLRTHTSPMQVRTMEKQKPPVRVIAPGKVYRCDSDITHTPMFAQVEGLVVDKGISFADLKGVLTTLVHQIFDDKTPLRFRPSFFPFTEPSAEVDIGCVMCKGSGCRVCSHTGWLEILGSGMVHPRVFEFVGYDTSEISGFAFGMGVERIAMLKYGIDDIRKYYENDLRFLNQF</sequence>
<keyword id="KW-0030">Aminoacyl-tRNA synthetase</keyword>
<keyword id="KW-0067">ATP-binding</keyword>
<keyword id="KW-0963">Cytoplasm</keyword>
<keyword id="KW-0436">Ligase</keyword>
<keyword id="KW-0460">Magnesium</keyword>
<keyword id="KW-0479">Metal-binding</keyword>
<keyword id="KW-0547">Nucleotide-binding</keyword>
<keyword id="KW-0648">Protein biosynthesis</keyword>
<keyword id="KW-1185">Reference proteome</keyword>
<protein>
    <recommendedName>
        <fullName evidence="1">Phenylalanine--tRNA ligase alpha subunit</fullName>
        <ecNumber evidence="1">6.1.1.20</ecNumber>
    </recommendedName>
    <alternativeName>
        <fullName evidence="1">Phenylalanyl-tRNA synthetase alpha subunit</fullName>
        <shortName evidence="1">PheRS</shortName>
    </alternativeName>
</protein>
<proteinExistence type="inferred from homology"/>
<reference key="1">
    <citation type="journal article" date="2012" name="Environ. Microbiol.">
        <title>The genome sequence of Desulfatibacillum alkenivorans AK-01: a blueprint for anaerobic alkane oxidation.</title>
        <authorList>
            <person name="Callaghan A.V."/>
            <person name="Morris B.E."/>
            <person name="Pereira I.A."/>
            <person name="McInerney M.J."/>
            <person name="Austin R.N."/>
            <person name="Groves J.T."/>
            <person name="Kukor J.J."/>
            <person name="Suflita J.M."/>
            <person name="Young L.Y."/>
            <person name="Zylstra G.J."/>
            <person name="Wawrik B."/>
        </authorList>
    </citation>
    <scope>NUCLEOTIDE SEQUENCE [LARGE SCALE GENOMIC DNA]</scope>
    <source>
        <strain>AK-01</strain>
    </source>
</reference>
<accession>B8FFU3</accession>
<comment type="catalytic activity">
    <reaction evidence="1">
        <text>tRNA(Phe) + L-phenylalanine + ATP = L-phenylalanyl-tRNA(Phe) + AMP + diphosphate + H(+)</text>
        <dbReference type="Rhea" id="RHEA:19413"/>
        <dbReference type="Rhea" id="RHEA-COMP:9668"/>
        <dbReference type="Rhea" id="RHEA-COMP:9699"/>
        <dbReference type="ChEBI" id="CHEBI:15378"/>
        <dbReference type="ChEBI" id="CHEBI:30616"/>
        <dbReference type="ChEBI" id="CHEBI:33019"/>
        <dbReference type="ChEBI" id="CHEBI:58095"/>
        <dbReference type="ChEBI" id="CHEBI:78442"/>
        <dbReference type="ChEBI" id="CHEBI:78531"/>
        <dbReference type="ChEBI" id="CHEBI:456215"/>
        <dbReference type="EC" id="6.1.1.20"/>
    </reaction>
</comment>
<comment type="cofactor">
    <cofactor evidence="1">
        <name>Mg(2+)</name>
        <dbReference type="ChEBI" id="CHEBI:18420"/>
    </cofactor>
    <text evidence="1">Binds 2 magnesium ions per tetramer.</text>
</comment>
<comment type="subunit">
    <text evidence="1">Tetramer of two alpha and two beta subunits.</text>
</comment>
<comment type="subcellular location">
    <subcellularLocation>
        <location evidence="1">Cytoplasm</location>
    </subcellularLocation>
</comment>
<comment type="similarity">
    <text evidence="1">Belongs to the class-II aminoacyl-tRNA synthetase family. Phe-tRNA synthetase alpha subunit type 1 subfamily.</text>
</comment>
<dbReference type="EC" id="6.1.1.20" evidence="1"/>
<dbReference type="EMBL" id="CP001322">
    <property type="protein sequence ID" value="ACL03498.1"/>
    <property type="molecule type" value="Genomic_DNA"/>
</dbReference>
<dbReference type="RefSeq" id="WP_012610932.1">
    <property type="nucleotide sequence ID" value="NC_011768.1"/>
</dbReference>
<dbReference type="SMR" id="B8FFU3"/>
<dbReference type="KEGG" id="dal:Dalk_1801"/>
<dbReference type="eggNOG" id="COG0016">
    <property type="taxonomic scope" value="Bacteria"/>
</dbReference>
<dbReference type="HOGENOM" id="CLU_025086_0_1_7"/>
<dbReference type="Proteomes" id="UP000000739">
    <property type="component" value="Chromosome"/>
</dbReference>
<dbReference type="GO" id="GO:0005737">
    <property type="term" value="C:cytoplasm"/>
    <property type="evidence" value="ECO:0007669"/>
    <property type="project" value="UniProtKB-SubCell"/>
</dbReference>
<dbReference type="GO" id="GO:0005524">
    <property type="term" value="F:ATP binding"/>
    <property type="evidence" value="ECO:0007669"/>
    <property type="project" value="UniProtKB-UniRule"/>
</dbReference>
<dbReference type="GO" id="GO:0000287">
    <property type="term" value="F:magnesium ion binding"/>
    <property type="evidence" value="ECO:0007669"/>
    <property type="project" value="UniProtKB-UniRule"/>
</dbReference>
<dbReference type="GO" id="GO:0004826">
    <property type="term" value="F:phenylalanine-tRNA ligase activity"/>
    <property type="evidence" value="ECO:0007669"/>
    <property type="project" value="UniProtKB-UniRule"/>
</dbReference>
<dbReference type="GO" id="GO:0000049">
    <property type="term" value="F:tRNA binding"/>
    <property type="evidence" value="ECO:0007669"/>
    <property type="project" value="InterPro"/>
</dbReference>
<dbReference type="GO" id="GO:0006432">
    <property type="term" value="P:phenylalanyl-tRNA aminoacylation"/>
    <property type="evidence" value="ECO:0007669"/>
    <property type="project" value="UniProtKB-UniRule"/>
</dbReference>
<dbReference type="CDD" id="cd00496">
    <property type="entry name" value="PheRS_alpha_core"/>
    <property type="match status" value="1"/>
</dbReference>
<dbReference type="FunFam" id="3.30.930.10:FF:000003">
    <property type="entry name" value="Phenylalanine--tRNA ligase alpha subunit"/>
    <property type="match status" value="1"/>
</dbReference>
<dbReference type="Gene3D" id="3.30.930.10">
    <property type="entry name" value="Bira Bifunctional Protein, Domain 2"/>
    <property type="match status" value="1"/>
</dbReference>
<dbReference type="HAMAP" id="MF_00281">
    <property type="entry name" value="Phe_tRNA_synth_alpha1"/>
    <property type="match status" value="1"/>
</dbReference>
<dbReference type="InterPro" id="IPR006195">
    <property type="entry name" value="aa-tRNA-synth_II"/>
</dbReference>
<dbReference type="InterPro" id="IPR045864">
    <property type="entry name" value="aa-tRNA-synth_II/BPL/LPL"/>
</dbReference>
<dbReference type="InterPro" id="IPR004529">
    <property type="entry name" value="Phe-tRNA-synth_IIc_asu"/>
</dbReference>
<dbReference type="InterPro" id="IPR004188">
    <property type="entry name" value="Phe-tRNA_ligase_II_N"/>
</dbReference>
<dbReference type="InterPro" id="IPR022911">
    <property type="entry name" value="Phe_tRNA_ligase_alpha1_bac"/>
</dbReference>
<dbReference type="InterPro" id="IPR002319">
    <property type="entry name" value="Phenylalanyl-tRNA_Synthase"/>
</dbReference>
<dbReference type="InterPro" id="IPR010978">
    <property type="entry name" value="tRNA-bd_arm"/>
</dbReference>
<dbReference type="NCBIfam" id="TIGR00468">
    <property type="entry name" value="pheS"/>
    <property type="match status" value="1"/>
</dbReference>
<dbReference type="PANTHER" id="PTHR11538:SF41">
    <property type="entry name" value="PHENYLALANINE--TRNA LIGASE, MITOCHONDRIAL"/>
    <property type="match status" value="1"/>
</dbReference>
<dbReference type="PANTHER" id="PTHR11538">
    <property type="entry name" value="PHENYLALANYL-TRNA SYNTHETASE"/>
    <property type="match status" value="1"/>
</dbReference>
<dbReference type="Pfam" id="PF02912">
    <property type="entry name" value="Phe_tRNA-synt_N"/>
    <property type="match status" value="1"/>
</dbReference>
<dbReference type="Pfam" id="PF01409">
    <property type="entry name" value="tRNA-synt_2d"/>
    <property type="match status" value="1"/>
</dbReference>
<dbReference type="SUPFAM" id="SSF55681">
    <property type="entry name" value="Class II aaRS and biotin synthetases"/>
    <property type="match status" value="1"/>
</dbReference>
<dbReference type="SUPFAM" id="SSF46589">
    <property type="entry name" value="tRNA-binding arm"/>
    <property type="match status" value="1"/>
</dbReference>
<dbReference type="PROSITE" id="PS50862">
    <property type="entry name" value="AA_TRNA_LIGASE_II"/>
    <property type="match status" value="1"/>
</dbReference>
<evidence type="ECO:0000255" key="1">
    <source>
        <dbReference type="HAMAP-Rule" id="MF_00281"/>
    </source>
</evidence>
<organism>
    <name type="scientific">Desulfatibacillum aliphaticivorans</name>
    <dbReference type="NCBI Taxonomy" id="218208"/>
    <lineage>
        <taxon>Bacteria</taxon>
        <taxon>Pseudomonadati</taxon>
        <taxon>Thermodesulfobacteriota</taxon>
        <taxon>Desulfobacteria</taxon>
        <taxon>Desulfobacterales</taxon>
        <taxon>Desulfatibacillaceae</taxon>
        <taxon>Desulfatibacillum</taxon>
    </lineage>
</organism>
<name>SYFA_DESAL</name>
<gene>
    <name evidence="1" type="primary">pheS</name>
    <name type="ordered locus">Dalk_1801</name>
</gene>
<feature type="chain" id="PRO_1000119390" description="Phenylalanine--tRNA ligase alpha subunit">
    <location>
        <begin position="1"/>
        <end position="334"/>
    </location>
</feature>
<feature type="binding site" evidence="1">
    <location>
        <position position="249"/>
    </location>
    <ligand>
        <name>Mg(2+)</name>
        <dbReference type="ChEBI" id="CHEBI:18420"/>
        <note>shared with beta subunit</note>
    </ligand>
</feature>